<accession>Q4JVN7</accession>
<proteinExistence type="inferred from homology"/>
<dbReference type="EC" id="6.3.1.13" evidence="1"/>
<dbReference type="EMBL" id="CR931997">
    <property type="protein sequence ID" value="CAI37120.1"/>
    <property type="molecule type" value="Genomic_DNA"/>
</dbReference>
<dbReference type="RefSeq" id="WP_011273536.1">
    <property type="nucleotide sequence ID" value="NC_007164.1"/>
</dbReference>
<dbReference type="SMR" id="Q4JVN7"/>
<dbReference type="STRING" id="306537.jk0956"/>
<dbReference type="KEGG" id="cjk:jk0956"/>
<dbReference type="PATRIC" id="fig|306537.10.peg.967"/>
<dbReference type="eggNOG" id="COG0215">
    <property type="taxonomic scope" value="Bacteria"/>
</dbReference>
<dbReference type="HOGENOM" id="CLU_013528_0_0_11"/>
<dbReference type="OrthoDB" id="9815130at2"/>
<dbReference type="Proteomes" id="UP000000545">
    <property type="component" value="Chromosome"/>
</dbReference>
<dbReference type="GO" id="GO:0005829">
    <property type="term" value="C:cytosol"/>
    <property type="evidence" value="ECO:0007669"/>
    <property type="project" value="TreeGrafter"/>
</dbReference>
<dbReference type="GO" id="GO:0005524">
    <property type="term" value="F:ATP binding"/>
    <property type="evidence" value="ECO:0007669"/>
    <property type="project" value="UniProtKB-KW"/>
</dbReference>
<dbReference type="GO" id="GO:0035446">
    <property type="term" value="F:cysteine-glucosaminylinositol ligase activity"/>
    <property type="evidence" value="ECO:0007669"/>
    <property type="project" value="UniProtKB-UniRule"/>
</dbReference>
<dbReference type="GO" id="GO:0004817">
    <property type="term" value="F:cysteine-tRNA ligase activity"/>
    <property type="evidence" value="ECO:0007669"/>
    <property type="project" value="TreeGrafter"/>
</dbReference>
<dbReference type="GO" id="GO:0008270">
    <property type="term" value="F:zinc ion binding"/>
    <property type="evidence" value="ECO:0007669"/>
    <property type="project" value="UniProtKB-UniRule"/>
</dbReference>
<dbReference type="GO" id="GO:0006423">
    <property type="term" value="P:cysteinyl-tRNA aminoacylation"/>
    <property type="evidence" value="ECO:0007669"/>
    <property type="project" value="TreeGrafter"/>
</dbReference>
<dbReference type="GO" id="GO:0010125">
    <property type="term" value="P:mycothiol biosynthetic process"/>
    <property type="evidence" value="ECO:0007669"/>
    <property type="project" value="UniProtKB-UniRule"/>
</dbReference>
<dbReference type="CDD" id="cd00672">
    <property type="entry name" value="CysRS_core"/>
    <property type="match status" value="1"/>
</dbReference>
<dbReference type="Gene3D" id="1.20.120.640">
    <property type="entry name" value="Anticodon-binding domain of a subclass of class I aminoacyl-tRNA synthetases"/>
    <property type="match status" value="1"/>
</dbReference>
<dbReference type="Gene3D" id="3.40.50.620">
    <property type="entry name" value="HUPs"/>
    <property type="match status" value="1"/>
</dbReference>
<dbReference type="HAMAP" id="MF_01697">
    <property type="entry name" value="MshC"/>
    <property type="match status" value="1"/>
</dbReference>
<dbReference type="InterPro" id="IPR024909">
    <property type="entry name" value="Cys-tRNA/MSH_ligase"/>
</dbReference>
<dbReference type="InterPro" id="IPR017812">
    <property type="entry name" value="Mycothiol_ligase_MshC"/>
</dbReference>
<dbReference type="InterPro" id="IPR014729">
    <property type="entry name" value="Rossmann-like_a/b/a_fold"/>
</dbReference>
<dbReference type="InterPro" id="IPR032678">
    <property type="entry name" value="tRNA-synt_1_cat_dom"/>
</dbReference>
<dbReference type="NCBIfam" id="TIGR03447">
    <property type="entry name" value="mycothiol_MshC"/>
    <property type="match status" value="1"/>
</dbReference>
<dbReference type="PANTHER" id="PTHR10890:SF3">
    <property type="entry name" value="CYSTEINE--TRNA LIGASE, CYTOPLASMIC"/>
    <property type="match status" value="1"/>
</dbReference>
<dbReference type="PANTHER" id="PTHR10890">
    <property type="entry name" value="CYSTEINYL-TRNA SYNTHETASE"/>
    <property type="match status" value="1"/>
</dbReference>
<dbReference type="Pfam" id="PF01406">
    <property type="entry name" value="tRNA-synt_1e"/>
    <property type="match status" value="1"/>
</dbReference>
<dbReference type="PRINTS" id="PR00983">
    <property type="entry name" value="TRNASYNTHCYS"/>
</dbReference>
<dbReference type="SUPFAM" id="SSF52374">
    <property type="entry name" value="Nucleotidylyl transferase"/>
    <property type="match status" value="1"/>
</dbReference>
<name>MSHC2_CORJK</name>
<keyword id="KW-0067">ATP-binding</keyword>
<keyword id="KW-0436">Ligase</keyword>
<keyword id="KW-0479">Metal-binding</keyword>
<keyword id="KW-0547">Nucleotide-binding</keyword>
<keyword id="KW-1185">Reference proteome</keyword>
<keyword id="KW-0862">Zinc</keyword>
<organism>
    <name type="scientific">Corynebacterium jeikeium (strain K411)</name>
    <dbReference type="NCBI Taxonomy" id="306537"/>
    <lineage>
        <taxon>Bacteria</taxon>
        <taxon>Bacillati</taxon>
        <taxon>Actinomycetota</taxon>
        <taxon>Actinomycetes</taxon>
        <taxon>Mycobacteriales</taxon>
        <taxon>Corynebacteriaceae</taxon>
        <taxon>Corynebacterium</taxon>
    </lineage>
</organism>
<reference key="1">
    <citation type="journal article" date="2005" name="J. Bacteriol.">
        <title>Complete genome sequence and analysis of the multiresistant nosocomial pathogen Corynebacterium jeikeium K411, a lipid-requiring bacterium of the human skin flora.</title>
        <authorList>
            <person name="Tauch A."/>
            <person name="Kaiser O."/>
            <person name="Hain T."/>
            <person name="Goesmann A."/>
            <person name="Weisshaar B."/>
            <person name="Albersmeier A."/>
            <person name="Bekel T."/>
            <person name="Bischoff N."/>
            <person name="Brune I."/>
            <person name="Chakraborty T."/>
            <person name="Kalinowski J."/>
            <person name="Meyer F."/>
            <person name="Rupp O."/>
            <person name="Schneiker S."/>
            <person name="Viehoever P."/>
            <person name="Puehler A."/>
        </authorList>
    </citation>
    <scope>NUCLEOTIDE SEQUENCE [LARGE SCALE GENOMIC DNA]</scope>
    <source>
        <strain>K411</strain>
    </source>
</reference>
<feature type="chain" id="PRO_0000400440" description="L-cysteine:1D-myo-inositol 2-amino-2-deoxy-alpha-D-glucopyranoside ligase 2">
    <location>
        <begin position="1"/>
        <end position="415"/>
    </location>
</feature>
<feature type="short sequence motif" description="'HIGH' region" evidence="1">
    <location>
        <begin position="46"/>
        <end position="56"/>
    </location>
</feature>
<feature type="short sequence motif" description="'ERGGDP' region" evidence="1">
    <location>
        <begin position="188"/>
        <end position="193"/>
    </location>
</feature>
<feature type="short sequence motif" description="'KMSKS' region" evidence="1">
    <location>
        <begin position="290"/>
        <end position="294"/>
    </location>
</feature>
<feature type="binding site" evidence="1">
    <location>
        <begin position="44"/>
        <end position="47"/>
    </location>
    <ligand>
        <name>L-cysteinyl-5'-AMP</name>
        <dbReference type="ChEBI" id="CHEBI:144924"/>
    </ligand>
</feature>
<feature type="binding site" evidence="1">
    <location>
        <position position="44"/>
    </location>
    <ligand>
        <name>Zn(2+)</name>
        <dbReference type="ChEBI" id="CHEBI:29105"/>
    </ligand>
</feature>
<feature type="binding site" evidence="1">
    <location>
        <position position="59"/>
    </location>
    <ligand>
        <name>L-cysteinyl-5'-AMP</name>
        <dbReference type="ChEBI" id="CHEBI:144924"/>
    </ligand>
</feature>
<feature type="binding site" evidence="1">
    <location>
        <begin position="82"/>
        <end position="84"/>
    </location>
    <ligand>
        <name>L-cysteinyl-5'-AMP</name>
        <dbReference type="ChEBI" id="CHEBI:144924"/>
    </ligand>
</feature>
<feature type="binding site" evidence="1">
    <location>
        <position position="228"/>
    </location>
    <ligand>
        <name>L-cysteinyl-5'-AMP</name>
        <dbReference type="ChEBI" id="CHEBI:144924"/>
    </ligand>
</feature>
<feature type="binding site" evidence="1">
    <location>
        <position position="232"/>
    </location>
    <ligand>
        <name>Zn(2+)</name>
        <dbReference type="ChEBI" id="CHEBI:29105"/>
    </ligand>
</feature>
<feature type="binding site" evidence="1">
    <location>
        <begin position="250"/>
        <end position="252"/>
    </location>
    <ligand>
        <name>L-cysteinyl-5'-AMP</name>
        <dbReference type="ChEBI" id="CHEBI:144924"/>
    </ligand>
</feature>
<feature type="binding site" evidence="1">
    <location>
        <position position="257"/>
    </location>
    <ligand>
        <name>Zn(2+)</name>
        <dbReference type="ChEBI" id="CHEBI:29105"/>
    </ligand>
</feature>
<feature type="binding site" evidence="1">
    <location>
        <position position="284"/>
    </location>
    <ligand>
        <name>L-cysteinyl-5'-AMP</name>
        <dbReference type="ChEBI" id="CHEBI:144924"/>
    </ligand>
</feature>
<protein>
    <recommendedName>
        <fullName evidence="1">L-cysteine:1D-myo-inositol 2-amino-2-deoxy-alpha-D-glucopyranoside ligase 2</fullName>
        <shortName evidence="1">L-Cys:GlcN-Ins ligase 2</shortName>
        <ecNumber evidence="1">6.3.1.13</ecNumber>
    </recommendedName>
    <alternativeName>
        <fullName evidence="1">Mycothiol ligase 2</fullName>
        <shortName evidence="1">MSH ligase 2</shortName>
    </alternativeName>
</protein>
<evidence type="ECO:0000255" key="1">
    <source>
        <dbReference type="HAMAP-Rule" id="MF_01697"/>
    </source>
</evidence>
<comment type="function">
    <text evidence="1">Catalyzes the ATP-dependent condensation of GlcN-Ins and L-cysteine to form L-Cys-GlcN-Ins.</text>
</comment>
<comment type="catalytic activity">
    <reaction evidence="1">
        <text>1D-myo-inositol 2-amino-2-deoxy-alpha-D-glucopyranoside + L-cysteine + ATP = 1D-myo-inositol 2-(L-cysteinylamino)-2-deoxy-alpha-D-glucopyranoside + AMP + diphosphate + H(+)</text>
        <dbReference type="Rhea" id="RHEA:26176"/>
        <dbReference type="ChEBI" id="CHEBI:15378"/>
        <dbReference type="ChEBI" id="CHEBI:30616"/>
        <dbReference type="ChEBI" id="CHEBI:33019"/>
        <dbReference type="ChEBI" id="CHEBI:35235"/>
        <dbReference type="ChEBI" id="CHEBI:58886"/>
        <dbReference type="ChEBI" id="CHEBI:58887"/>
        <dbReference type="ChEBI" id="CHEBI:456215"/>
        <dbReference type="EC" id="6.3.1.13"/>
    </reaction>
</comment>
<comment type="cofactor">
    <cofactor evidence="1">
        <name>Zn(2+)</name>
        <dbReference type="ChEBI" id="CHEBI:29105"/>
    </cofactor>
    <text evidence="1">Binds 1 zinc ion per subunit.</text>
</comment>
<comment type="subunit">
    <text evidence="1">Monomer.</text>
</comment>
<comment type="similarity">
    <text evidence="1">Belongs to the class-I aminoacyl-tRNA synthetase family. MshC subfamily.</text>
</comment>
<sequence length="415" mass="45686">MHSWPEPEVPQLPGEAPQLRLYDTADDVVKPVEIPAGEVGMYVCGITPYDSTHLGHAATYLTFDLIHRYLRAAGHGVHYVQNITDVDDPLFERAERDGVDWQDLGTSQIDLFRSDMEDLAVIPPRDYIGAMESIDEVIEMVAKLLEVGAAYQLEGDEYPDIYADYTFLPQFGYESRYDEQQMAEFFAERGGDPERPGKRHPMDALLWRAHREGEPKWDSPFGPGRPGWHIECSAIAVNRLGAPFAIQGGGSDLRFPHHEFSATHAEAAHGVDRMAHHYVHTGMIGLDGTKMSKSLGNLVFVSRLTAAGHEPAAIRLGVYAGHYRQDRDWTNDVLAHAEHRLASWRAALATGSTTLDEARELVATVRGHLANDLDTAAALEALDDWAADTKTGAAGDEAAASEIKTAIDALLGVRL</sequence>
<gene>
    <name evidence="1" type="primary">mshC2</name>
    <name type="ordered locus">jk0956</name>
</gene>